<gene>
    <name evidence="1" type="primary">purL</name>
    <name type="ordered locus">PH1953</name>
</gene>
<organism>
    <name type="scientific">Pyrococcus horikoshii (strain ATCC 700860 / DSM 12428 / JCM 9974 / NBRC 100139 / OT-3)</name>
    <dbReference type="NCBI Taxonomy" id="70601"/>
    <lineage>
        <taxon>Archaea</taxon>
        <taxon>Methanobacteriati</taxon>
        <taxon>Methanobacteriota</taxon>
        <taxon>Thermococci</taxon>
        <taxon>Thermococcales</taxon>
        <taxon>Thermococcaceae</taxon>
        <taxon>Pyrococcus</taxon>
    </lineage>
</organism>
<sequence>MFPQEEKLIRERLGREPNDVERAMLEVMWSEHVSYKSSRKWLKLLPTKNEHVVLGPGEDAGIIKFDDKTWIVIGIESHNHPSAVEPYGGAATGVGGIVRDILCMGARPIALLDPIRFGPLEKEKNRYLFEYVVKGISDYGNRIGVPTVGGETEFDESLDNYTLVNVACVGIMKPEHLVHSYVTEPGLKLIIVGNRTGRDGIHGVTFASEELSENAEEEDRSAVQIPDPFTEKLLIEATLEAVYTGKVRALKDLGGGGLTCAASEMVGKRGFGAIIYADKVLLREPGMTPLEVMISESQERMLFAVRPEDVEELARIFEKYELEWSVVGEVIEEPKFIVYWKGSKVAELPIDLLTEVPTIEWPMKEYKIEEEVGIPRISLQEAFEKVWRSPNIVAKRWIWEQYDHEVQGRTVVKPGFDSAVLKINEEYGIAITADGNPNHCYLNPYHGAMGLVAEVVRNLVSVGAKPLALVDNLNFASPERPEVYWSFAETVKGLADAAKAFNLAYVSGNVSFYNEIVDKPIKPTPVVAGVGKVKLSKIPKGPNKGDVVTLVGETKRELGGSELYRVLGIRKGIAPRVNLEVERKNAESILRLINASLVSFVHDLSRGGLLVALAEVAALFNVGMEVTIKTDMNPVEFAFSESHGRYLVVLPERKLEEAREITDLKVIGRIIGSNSFSVKINDEVLLWNLDKLKDVYWNTLYRLMD</sequence>
<evidence type="ECO:0000255" key="1">
    <source>
        <dbReference type="HAMAP-Rule" id="MF_00420"/>
    </source>
</evidence>
<accession>O59621</accession>
<comment type="function">
    <text evidence="1">Part of the phosphoribosylformylglycinamidine synthase complex involved in the purines biosynthetic pathway. Catalyzes the ATP-dependent conversion of formylglycinamide ribonucleotide (FGAR) and glutamine to yield formylglycinamidine ribonucleotide (FGAM) and glutamate. The FGAM synthase complex is composed of three subunits. PurQ produces an ammonia molecule by converting glutamine to glutamate. PurL transfers the ammonia molecule to FGAR to form FGAM in an ATP-dependent manner. PurS interacts with PurQ and PurL and is thought to assist in the transfer of the ammonia molecule from PurQ to PurL.</text>
</comment>
<comment type="catalytic activity">
    <reaction evidence="1">
        <text>N(2)-formyl-N(1)-(5-phospho-beta-D-ribosyl)glycinamide + L-glutamine + ATP + H2O = 2-formamido-N(1)-(5-O-phospho-beta-D-ribosyl)acetamidine + L-glutamate + ADP + phosphate + H(+)</text>
        <dbReference type="Rhea" id="RHEA:17129"/>
        <dbReference type="ChEBI" id="CHEBI:15377"/>
        <dbReference type="ChEBI" id="CHEBI:15378"/>
        <dbReference type="ChEBI" id="CHEBI:29985"/>
        <dbReference type="ChEBI" id="CHEBI:30616"/>
        <dbReference type="ChEBI" id="CHEBI:43474"/>
        <dbReference type="ChEBI" id="CHEBI:58359"/>
        <dbReference type="ChEBI" id="CHEBI:147286"/>
        <dbReference type="ChEBI" id="CHEBI:147287"/>
        <dbReference type="ChEBI" id="CHEBI:456216"/>
        <dbReference type="EC" id="6.3.5.3"/>
    </reaction>
</comment>
<comment type="pathway">
    <text evidence="1">Purine metabolism; IMP biosynthesis via de novo pathway; 5-amino-1-(5-phospho-D-ribosyl)imidazole from N(2)-formyl-N(1)-(5-phospho-D-ribosyl)glycinamide: step 1/2.</text>
</comment>
<comment type="subunit">
    <text evidence="1">Monomer. Part of the FGAM synthase complex composed of 1 PurL, 1 PurQ and 2 PurS subunits.</text>
</comment>
<comment type="subcellular location">
    <subcellularLocation>
        <location evidence="1">Cytoplasm</location>
    </subcellularLocation>
</comment>
<comment type="similarity">
    <text evidence="1">Belongs to the FGAMS family.</text>
</comment>
<feature type="chain" id="PRO_0000100522" description="Phosphoribosylformylglycinamidine synthase subunit PurL">
    <location>
        <begin position="1"/>
        <end position="705"/>
    </location>
</feature>
<feature type="active site" evidence="1">
    <location>
        <position position="32"/>
    </location>
</feature>
<feature type="active site" description="Proton acceptor" evidence="1">
    <location>
        <position position="78"/>
    </location>
</feature>
<feature type="binding site" evidence="1">
    <location>
        <position position="35"/>
    </location>
    <ligand>
        <name>ATP</name>
        <dbReference type="ChEBI" id="CHEBI:30616"/>
    </ligand>
</feature>
<feature type="binding site" evidence="1">
    <location>
        <position position="76"/>
    </location>
    <ligand>
        <name>Mg(2+)</name>
        <dbReference type="ChEBI" id="CHEBI:18420"/>
        <label>1</label>
    </ligand>
</feature>
<feature type="binding site" evidence="1">
    <location>
        <begin position="77"/>
        <end position="80"/>
    </location>
    <ligand>
        <name>substrate</name>
    </ligand>
</feature>
<feature type="binding site" evidence="1">
    <location>
        <position position="99"/>
    </location>
    <ligand>
        <name>substrate</name>
    </ligand>
</feature>
<feature type="binding site" evidence="1">
    <location>
        <position position="100"/>
    </location>
    <ligand>
        <name>Mg(2+)</name>
        <dbReference type="ChEBI" id="CHEBI:18420"/>
        <label>2</label>
    </ligand>
</feature>
<feature type="binding site" evidence="1">
    <location>
        <position position="224"/>
    </location>
    <ligand>
        <name>substrate</name>
    </ligand>
</feature>
<feature type="binding site" evidence="1">
    <location>
        <position position="252"/>
    </location>
    <ligand>
        <name>Mg(2+)</name>
        <dbReference type="ChEBI" id="CHEBI:18420"/>
        <label>2</label>
    </ligand>
</feature>
<feature type="binding site" evidence="1">
    <location>
        <begin position="296"/>
        <end position="298"/>
    </location>
    <ligand>
        <name>substrate</name>
    </ligand>
</feature>
<feature type="binding site" evidence="1">
    <location>
        <position position="471"/>
    </location>
    <ligand>
        <name>ATP</name>
        <dbReference type="ChEBI" id="CHEBI:30616"/>
    </ligand>
</feature>
<feature type="binding site" evidence="1">
    <location>
        <position position="508"/>
    </location>
    <ligand>
        <name>ATP</name>
        <dbReference type="ChEBI" id="CHEBI:30616"/>
    </ligand>
</feature>
<feature type="binding site" evidence="1">
    <location>
        <position position="509"/>
    </location>
    <ligand>
        <name>Mg(2+)</name>
        <dbReference type="ChEBI" id="CHEBI:18420"/>
        <label>1</label>
    </ligand>
</feature>
<feature type="binding site" evidence="1">
    <location>
        <position position="511"/>
    </location>
    <ligand>
        <name>substrate</name>
    </ligand>
</feature>
<protein>
    <recommendedName>
        <fullName evidence="1">Phosphoribosylformylglycinamidine synthase subunit PurL</fullName>
        <shortName evidence="1">FGAM synthase</shortName>
        <ecNumber evidence="1">6.3.5.3</ecNumber>
    </recommendedName>
    <alternativeName>
        <fullName evidence="1">Formylglycinamide ribonucleotide amidotransferase subunit II</fullName>
        <shortName evidence="1">FGAR amidotransferase II</shortName>
        <shortName evidence="1">FGAR-AT II</shortName>
    </alternativeName>
    <alternativeName>
        <fullName evidence="1">Glutamine amidotransferase PurL</fullName>
    </alternativeName>
    <alternativeName>
        <fullName evidence="1">Phosphoribosylformylglycinamidine synthase subunit II</fullName>
    </alternativeName>
</protein>
<proteinExistence type="inferred from homology"/>
<dbReference type="EC" id="6.3.5.3" evidence="1"/>
<dbReference type="EMBL" id="BA000001">
    <property type="protein sequence ID" value="BAA31080.1"/>
    <property type="molecule type" value="Genomic_DNA"/>
</dbReference>
<dbReference type="PIR" id="A71211">
    <property type="entry name" value="A71211"/>
</dbReference>
<dbReference type="RefSeq" id="WP_010886018.1">
    <property type="nucleotide sequence ID" value="NC_000961.1"/>
</dbReference>
<dbReference type="SMR" id="O59621"/>
<dbReference type="STRING" id="70601.gene:9378966"/>
<dbReference type="EnsemblBacteria" id="BAA31080">
    <property type="protein sequence ID" value="BAA31080"/>
    <property type="gene ID" value="BAA31080"/>
</dbReference>
<dbReference type="GeneID" id="1442800"/>
<dbReference type="KEGG" id="pho:PH1953"/>
<dbReference type="eggNOG" id="arCOG00641">
    <property type="taxonomic scope" value="Archaea"/>
</dbReference>
<dbReference type="OrthoDB" id="8251at2157"/>
<dbReference type="UniPathway" id="UPA00074">
    <property type="reaction ID" value="UER00128"/>
</dbReference>
<dbReference type="Proteomes" id="UP000000752">
    <property type="component" value="Chromosome"/>
</dbReference>
<dbReference type="GO" id="GO:0005737">
    <property type="term" value="C:cytoplasm"/>
    <property type="evidence" value="ECO:0007669"/>
    <property type="project" value="UniProtKB-SubCell"/>
</dbReference>
<dbReference type="GO" id="GO:0005524">
    <property type="term" value="F:ATP binding"/>
    <property type="evidence" value="ECO:0007669"/>
    <property type="project" value="UniProtKB-UniRule"/>
</dbReference>
<dbReference type="GO" id="GO:0000287">
    <property type="term" value="F:magnesium ion binding"/>
    <property type="evidence" value="ECO:0007669"/>
    <property type="project" value="UniProtKB-UniRule"/>
</dbReference>
<dbReference type="GO" id="GO:0004642">
    <property type="term" value="F:phosphoribosylformylglycinamidine synthase activity"/>
    <property type="evidence" value="ECO:0007669"/>
    <property type="project" value="UniProtKB-UniRule"/>
</dbReference>
<dbReference type="GO" id="GO:0006189">
    <property type="term" value="P:'de novo' IMP biosynthetic process"/>
    <property type="evidence" value="ECO:0007669"/>
    <property type="project" value="UniProtKB-UniRule"/>
</dbReference>
<dbReference type="CDD" id="cd02203">
    <property type="entry name" value="PurL_repeat1"/>
    <property type="match status" value="1"/>
</dbReference>
<dbReference type="CDD" id="cd02204">
    <property type="entry name" value="PurL_repeat2"/>
    <property type="match status" value="1"/>
</dbReference>
<dbReference type="Gene3D" id="3.90.650.10">
    <property type="entry name" value="PurM-like C-terminal domain"/>
    <property type="match status" value="2"/>
</dbReference>
<dbReference type="Gene3D" id="3.30.1330.10">
    <property type="entry name" value="PurM-like, N-terminal domain"/>
    <property type="match status" value="2"/>
</dbReference>
<dbReference type="HAMAP" id="MF_00420">
    <property type="entry name" value="PurL_2"/>
    <property type="match status" value="1"/>
</dbReference>
<dbReference type="InterPro" id="IPR010074">
    <property type="entry name" value="PRibForGlyAmidine_synth_PurL"/>
</dbReference>
<dbReference type="InterPro" id="IPR041609">
    <property type="entry name" value="PurL_linker"/>
</dbReference>
<dbReference type="InterPro" id="IPR010918">
    <property type="entry name" value="PurM-like_C_dom"/>
</dbReference>
<dbReference type="InterPro" id="IPR036676">
    <property type="entry name" value="PurM-like_C_sf"/>
</dbReference>
<dbReference type="InterPro" id="IPR016188">
    <property type="entry name" value="PurM-like_N"/>
</dbReference>
<dbReference type="InterPro" id="IPR036921">
    <property type="entry name" value="PurM-like_N_sf"/>
</dbReference>
<dbReference type="NCBIfam" id="TIGR01736">
    <property type="entry name" value="FGAM_synth_II"/>
    <property type="match status" value="1"/>
</dbReference>
<dbReference type="NCBIfam" id="NF002290">
    <property type="entry name" value="PRK01213.1"/>
    <property type="match status" value="1"/>
</dbReference>
<dbReference type="PANTHER" id="PTHR43555">
    <property type="entry name" value="PHOSPHORIBOSYLFORMYLGLYCINAMIDINE SYNTHASE SUBUNIT PURL"/>
    <property type="match status" value="1"/>
</dbReference>
<dbReference type="PANTHER" id="PTHR43555:SF1">
    <property type="entry name" value="PHOSPHORIBOSYLFORMYLGLYCINAMIDINE SYNTHASE SUBUNIT PURL"/>
    <property type="match status" value="1"/>
</dbReference>
<dbReference type="Pfam" id="PF00586">
    <property type="entry name" value="AIRS"/>
    <property type="match status" value="2"/>
</dbReference>
<dbReference type="Pfam" id="PF02769">
    <property type="entry name" value="AIRS_C"/>
    <property type="match status" value="2"/>
</dbReference>
<dbReference type="Pfam" id="PF18072">
    <property type="entry name" value="FGAR-AT_linker"/>
    <property type="match status" value="1"/>
</dbReference>
<dbReference type="PIRSF" id="PIRSF001587">
    <property type="entry name" value="FGAM_synthase_II"/>
    <property type="match status" value="1"/>
</dbReference>
<dbReference type="SUPFAM" id="SSF56042">
    <property type="entry name" value="PurM C-terminal domain-like"/>
    <property type="match status" value="2"/>
</dbReference>
<dbReference type="SUPFAM" id="SSF55326">
    <property type="entry name" value="PurM N-terminal domain-like"/>
    <property type="match status" value="2"/>
</dbReference>
<name>PURL_PYRHO</name>
<reference key="1">
    <citation type="journal article" date="1998" name="DNA Res.">
        <title>Complete sequence and gene organization of the genome of a hyper-thermophilic archaebacterium, Pyrococcus horikoshii OT3.</title>
        <authorList>
            <person name="Kawarabayasi Y."/>
            <person name="Sawada M."/>
            <person name="Horikawa H."/>
            <person name="Haikawa Y."/>
            <person name="Hino Y."/>
            <person name="Yamamoto S."/>
            <person name="Sekine M."/>
            <person name="Baba S."/>
            <person name="Kosugi H."/>
            <person name="Hosoyama A."/>
            <person name="Nagai Y."/>
            <person name="Sakai M."/>
            <person name="Ogura K."/>
            <person name="Otsuka R."/>
            <person name="Nakazawa H."/>
            <person name="Takamiya M."/>
            <person name="Ohfuku Y."/>
            <person name="Funahashi T."/>
            <person name="Tanaka T."/>
            <person name="Kudoh Y."/>
            <person name="Yamazaki J."/>
            <person name="Kushida N."/>
            <person name="Oguchi A."/>
            <person name="Aoki K."/>
            <person name="Yoshizawa T."/>
            <person name="Nakamura Y."/>
            <person name="Robb F.T."/>
            <person name="Horikoshi K."/>
            <person name="Masuchi Y."/>
            <person name="Shizuya H."/>
            <person name="Kikuchi H."/>
        </authorList>
    </citation>
    <scope>NUCLEOTIDE SEQUENCE [LARGE SCALE GENOMIC DNA]</scope>
    <source>
        <strain>ATCC 700860 / DSM 12428 / JCM 9974 / NBRC 100139 / OT-3</strain>
    </source>
</reference>
<keyword id="KW-0067">ATP-binding</keyword>
<keyword id="KW-0963">Cytoplasm</keyword>
<keyword id="KW-0436">Ligase</keyword>
<keyword id="KW-0460">Magnesium</keyword>
<keyword id="KW-0479">Metal-binding</keyword>
<keyword id="KW-0547">Nucleotide-binding</keyword>
<keyword id="KW-0658">Purine biosynthesis</keyword>